<protein>
    <recommendedName>
        <fullName evidence="1">Small ribosomal subunit protein uS11</fullName>
    </recommendedName>
    <alternativeName>
        <fullName evidence="2">30S ribosomal protein S11</fullName>
    </alternativeName>
</protein>
<reference key="1">
    <citation type="submission" date="2008-04" db="EMBL/GenBank/DDBJ databases">
        <title>Complete sequence of Yersinia pseudotuberculosis PB1/+.</title>
        <authorList>
            <person name="Copeland A."/>
            <person name="Lucas S."/>
            <person name="Lapidus A."/>
            <person name="Glavina del Rio T."/>
            <person name="Dalin E."/>
            <person name="Tice H."/>
            <person name="Bruce D."/>
            <person name="Goodwin L."/>
            <person name="Pitluck S."/>
            <person name="Munk A.C."/>
            <person name="Brettin T."/>
            <person name="Detter J.C."/>
            <person name="Han C."/>
            <person name="Tapia R."/>
            <person name="Schmutz J."/>
            <person name="Larimer F."/>
            <person name="Land M."/>
            <person name="Hauser L."/>
            <person name="Challacombe J.F."/>
            <person name="Green L."/>
            <person name="Lindler L.E."/>
            <person name="Nikolich M.P."/>
            <person name="Richardson P."/>
        </authorList>
    </citation>
    <scope>NUCLEOTIDE SEQUENCE [LARGE SCALE GENOMIC DNA]</scope>
    <source>
        <strain>PB1/+</strain>
    </source>
</reference>
<proteinExistence type="inferred from homology"/>
<dbReference type="EMBL" id="CP001048">
    <property type="protein sequence ID" value="ACC90816.1"/>
    <property type="molecule type" value="Genomic_DNA"/>
</dbReference>
<dbReference type="RefSeq" id="WP_002218948.1">
    <property type="nucleotide sequence ID" value="NZ_CP009780.1"/>
</dbReference>
<dbReference type="SMR" id="B2K514"/>
<dbReference type="GeneID" id="96663173"/>
<dbReference type="KEGG" id="ypb:YPTS_3867"/>
<dbReference type="PATRIC" id="fig|502801.10.peg.3332"/>
<dbReference type="GO" id="GO:1990904">
    <property type="term" value="C:ribonucleoprotein complex"/>
    <property type="evidence" value="ECO:0007669"/>
    <property type="project" value="UniProtKB-KW"/>
</dbReference>
<dbReference type="GO" id="GO:0005840">
    <property type="term" value="C:ribosome"/>
    <property type="evidence" value="ECO:0007669"/>
    <property type="project" value="UniProtKB-KW"/>
</dbReference>
<dbReference type="GO" id="GO:0019843">
    <property type="term" value="F:rRNA binding"/>
    <property type="evidence" value="ECO:0007669"/>
    <property type="project" value="UniProtKB-UniRule"/>
</dbReference>
<dbReference type="GO" id="GO:0003735">
    <property type="term" value="F:structural constituent of ribosome"/>
    <property type="evidence" value="ECO:0007669"/>
    <property type="project" value="InterPro"/>
</dbReference>
<dbReference type="GO" id="GO:0006412">
    <property type="term" value="P:translation"/>
    <property type="evidence" value="ECO:0007669"/>
    <property type="project" value="UniProtKB-UniRule"/>
</dbReference>
<dbReference type="FunFam" id="3.30.420.80:FF:000001">
    <property type="entry name" value="30S ribosomal protein S11"/>
    <property type="match status" value="1"/>
</dbReference>
<dbReference type="Gene3D" id="3.30.420.80">
    <property type="entry name" value="Ribosomal protein S11"/>
    <property type="match status" value="1"/>
</dbReference>
<dbReference type="HAMAP" id="MF_01310">
    <property type="entry name" value="Ribosomal_uS11"/>
    <property type="match status" value="1"/>
</dbReference>
<dbReference type="InterPro" id="IPR001971">
    <property type="entry name" value="Ribosomal_uS11"/>
</dbReference>
<dbReference type="InterPro" id="IPR019981">
    <property type="entry name" value="Ribosomal_uS11_bac-type"/>
</dbReference>
<dbReference type="InterPro" id="IPR018102">
    <property type="entry name" value="Ribosomal_uS11_CS"/>
</dbReference>
<dbReference type="InterPro" id="IPR036967">
    <property type="entry name" value="Ribosomal_uS11_sf"/>
</dbReference>
<dbReference type="NCBIfam" id="NF003698">
    <property type="entry name" value="PRK05309.1"/>
    <property type="match status" value="1"/>
</dbReference>
<dbReference type="NCBIfam" id="TIGR03632">
    <property type="entry name" value="uS11_bact"/>
    <property type="match status" value="1"/>
</dbReference>
<dbReference type="PANTHER" id="PTHR11759">
    <property type="entry name" value="40S RIBOSOMAL PROTEIN S14/30S RIBOSOMAL PROTEIN S11"/>
    <property type="match status" value="1"/>
</dbReference>
<dbReference type="Pfam" id="PF00411">
    <property type="entry name" value="Ribosomal_S11"/>
    <property type="match status" value="1"/>
</dbReference>
<dbReference type="PIRSF" id="PIRSF002131">
    <property type="entry name" value="Ribosomal_S11"/>
    <property type="match status" value="1"/>
</dbReference>
<dbReference type="SUPFAM" id="SSF53137">
    <property type="entry name" value="Translational machinery components"/>
    <property type="match status" value="1"/>
</dbReference>
<dbReference type="PROSITE" id="PS00054">
    <property type="entry name" value="RIBOSOMAL_S11"/>
    <property type="match status" value="1"/>
</dbReference>
<sequence>MAKAPIRARKRVRKTVSDGVAHIHASFNNTIVTITDRQGNALGWATAGGSGFRGSRKSTPFAAQVAAERCAEAVKEYGIKNLEVMVKGPGPGRESTIRALNAAGFRITNITDVTPIPHNGCRPPKKRRV</sequence>
<feature type="chain" id="PRO_1000141163" description="Small ribosomal subunit protein uS11">
    <location>
        <begin position="1"/>
        <end position="129"/>
    </location>
</feature>
<organism>
    <name type="scientific">Yersinia pseudotuberculosis serotype IB (strain PB1/+)</name>
    <dbReference type="NCBI Taxonomy" id="502801"/>
    <lineage>
        <taxon>Bacteria</taxon>
        <taxon>Pseudomonadati</taxon>
        <taxon>Pseudomonadota</taxon>
        <taxon>Gammaproteobacteria</taxon>
        <taxon>Enterobacterales</taxon>
        <taxon>Yersiniaceae</taxon>
        <taxon>Yersinia</taxon>
    </lineage>
</organism>
<evidence type="ECO:0000255" key="1">
    <source>
        <dbReference type="HAMAP-Rule" id="MF_01310"/>
    </source>
</evidence>
<evidence type="ECO:0000305" key="2"/>
<keyword id="KW-0687">Ribonucleoprotein</keyword>
<keyword id="KW-0689">Ribosomal protein</keyword>
<keyword id="KW-0694">RNA-binding</keyword>
<keyword id="KW-0699">rRNA-binding</keyword>
<name>RS11_YERPB</name>
<accession>B2K514</accession>
<gene>
    <name evidence="1" type="primary">rpsK</name>
    <name type="ordered locus">YPTS_3867</name>
</gene>
<comment type="function">
    <text evidence="1">Located on the platform of the 30S subunit, it bridges several disparate RNA helices of the 16S rRNA. Forms part of the Shine-Dalgarno cleft in the 70S ribosome.</text>
</comment>
<comment type="subunit">
    <text evidence="1">Part of the 30S ribosomal subunit. Interacts with proteins S7 and S18. Binds to IF-3.</text>
</comment>
<comment type="similarity">
    <text evidence="1">Belongs to the universal ribosomal protein uS11 family.</text>
</comment>